<comment type="function">
    <text>Alpha toxins bind voltage-independently at site-3 of sodium channels (Nav) and inhibit the inactivation of the activated channels, thereby blocking neuronal transmission. As it competes neither with the classical alpha-toxin AaH2 nor the beta-toxin Css2, this toxin is an alpha-like toxin.</text>
</comment>
<comment type="subcellular location">
    <subcellularLocation>
        <location>Secreted</location>
    </subcellularLocation>
</comment>
<comment type="tissue specificity">
    <text>Expressed by the venom gland.</text>
</comment>
<comment type="domain">
    <text evidence="2">Has the structural arrangement of an alpha-helix connected to antiparallel beta-sheets by disulfide bonds (CS-alpha/beta).</text>
</comment>
<comment type="similarity">
    <text evidence="2">Belongs to the long (4 C-C) scorpion toxin superfamily. Sodium channel inhibitor family. Alpha subfamily.</text>
</comment>
<accession>P13488</accession>
<proteinExistence type="evidence at protein level"/>
<reference key="1">
    <citation type="journal article" date="1987" name="Eur. J. Biochem.">
        <title>Characterization of six toxins from the venom of the Moroccan scorpion Buthus occitanus mardochei.</title>
        <authorList>
            <person name="Vargas O."/>
            <person name="Martin M.-F."/>
            <person name="Rochat H."/>
        </authorList>
    </citation>
    <scope>PROTEIN SEQUENCE</scope>
    <source>
        <tissue>Venom</tissue>
    </source>
</reference>
<dbReference type="PIR" id="A29386">
    <property type="entry name" value="A29386"/>
</dbReference>
<dbReference type="SMR" id="P13488"/>
<dbReference type="GO" id="GO:0005576">
    <property type="term" value="C:extracellular region"/>
    <property type="evidence" value="ECO:0007669"/>
    <property type="project" value="UniProtKB-SubCell"/>
</dbReference>
<dbReference type="GO" id="GO:0019871">
    <property type="term" value="F:sodium channel inhibitor activity"/>
    <property type="evidence" value="ECO:0007669"/>
    <property type="project" value="InterPro"/>
</dbReference>
<dbReference type="GO" id="GO:0090729">
    <property type="term" value="F:toxin activity"/>
    <property type="evidence" value="ECO:0007669"/>
    <property type="project" value="UniProtKB-KW"/>
</dbReference>
<dbReference type="GO" id="GO:0006952">
    <property type="term" value="P:defense response"/>
    <property type="evidence" value="ECO:0007669"/>
    <property type="project" value="InterPro"/>
</dbReference>
<dbReference type="CDD" id="cd23106">
    <property type="entry name" value="neurotoxins_LC_scorpion"/>
    <property type="match status" value="1"/>
</dbReference>
<dbReference type="Gene3D" id="3.30.30.10">
    <property type="entry name" value="Knottin, scorpion toxin-like"/>
    <property type="match status" value="1"/>
</dbReference>
<dbReference type="InterPro" id="IPR044062">
    <property type="entry name" value="LCN-type_CS_alpha_beta_dom"/>
</dbReference>
<dbReference type="InterPro" id="IPR003614">
    <property type="entry name" value="Scorpion_toxin-like"/>
</dbReference>
<dbReference type="InterPro" id="IPR036574">
    <property type="entry name" value="Scorpion_toxin-like_sf"/>
</dbReference>
<dbReference type="InterPro" id="IPR018218">
    <property type="entry name" value="Scorpion_toxinL"/>
</dbReference>
<dbReference type="InterPro" id="IPR002061">
    <property type="entry name" value="Scorpion_toxinL/defensin"/>
</dbReference>
<dbReference type="Pfam" id="PF00537">
    <property type="entry name" value="Toxin_3"/>
    <property type="match status" value="1"/>
</dbReference>
<dbReference type="PRINTS" id="PR00285">
    <property type="entry name" value="SCORPNTOXIN"/>
</dbReference>
<dbReference type="SMART" id="SM00505">
    <property type="entry name" value="Knot1"/>
    <property type="match status" value="1"/>
</dbReference>
<dbReference type="SUPFAM" id="SSF57095">
    <property type="entry name" value="Scorpion toxin-like"/>
    <property type="match status" value="1"/>
</dbReference>
<dbReference type="PROSITE" id="PS51863">
    <property type="entry name" value="LCN_CSAB"/>
    <property type="match status" value="1"/>
</dbReference>
<protein>
    <recommendedName>
        <fullName>Alpha-like toxin Bom3</fullName>
    </recommendedName>
    <alternativeName>
        <fullName>Bom III</fullName>
        <shortName>BomIII</shortName>
    </alternativeName>
</protein>
<keyword id="KW-0903">Direct protein sequencing</keyword>
<keyword id="KW-1015">Disulfide bond</keyword>
<keyword id="KW-0872">Ion channel impairing toxin</keyword>
<keyword id="KW-0528">Neurotoxin</keyword>
<keyword id="KW-0964">Secreted</keyword>
<keyword id="KW-0800">Toxin</keyword>
<keyword id="KW-0738">Voltage-gated sodium channel impairing toxin</keyword>
<sequence>GRDGYIAQPENCVYHCFPGSSGCDTLCKEKGATSGHCGFLPGSGVACWCDNLPNKVPIVVGGEKCH</sequence>
<name>SCX3_BUTOM</name>
<evidence type="ECO:0000255" key="1">
    <source>
        <dbReference type="PROSITE-ProRule" id="PRU01210"/>
    </source>
</evidence>
<evidence type="ECO:0000305" key="2"/>
<organism>
    <name type="scientific">Buthus occitanus mardochei</name>
    <name type="common">Moroccan scorpion</name>
    <name type="synonym">Buthus mardochei</name>
    <dbReference type="NCBI Taxonomy" id="6869"/>
    <lineage>
        <taxon>Eukaryota</taxon>
        <taxon>Metazoa</taxon>
        <taxon>Ecdysozoa</taxon>
        <taxon>Arthropoda</taxon>
        <taxon>Chelicerata</taxon>
        <taxon>Arachnida</taxon>
        <taxon>Scorpiones</taxon>
        <taxon>Buthida</taxon>
        <taxon>Buthoidea</taxon>
        <taxon>Buthidae</taxon>
        <taxon>Buthus</taxon>
    </lineage>
</organism>
<feature type="chain" id="PRO_0000066744" description="Alpha-like toxin Bom3">
    <location>
        <begin position="1"/>
        <end position="66"/>
    </location>
</feature>
<feature type="domain" description="LCN-type CS-alpha/beta" evidence="1">
    <location>
        <begin position="2"/>
        <end position="66"/>
    </location>
</feature>
<feature type="disulfide bond" evidence="1">
    <location>
        <begin position="12"/>
        <end position="65"/>
    </location>
</feature>
<feature type="disulfide bond" evidence="1">
    <location>
        <begin position="16"/>
        <end position="37"/>
    </location>
</feature>
<feature type="disulfide bond" evidence="1">
    <location>
        <begin position="23"/>
        <end position="47"/>
    </location>
</feature>
<feature type="disulfide bond" evidence="1">
    <location>
        <begin position="27"/>
        <end position="49"/>
    </location>
</feature>